<name>SO4C1_PONAB</name>
<dbReference type="EMBL" id="CR857208">
    <property type="protein sequence ID" value="CAH89507.1"/>
    <property type="molecule type" value="mRNA"/>
</dbReference>
<dbReference type="EMBL" id="CR859966">
    <property type="protein sequence ID" value="CAH92118.1"/>
    <property type="molecule type" value="mRNA"/>
</dbReference>
<dbReference type="RefSeq" id="NP_001128739.1">
    <property type="nucleotide sequence ID" value="NM_001135267.2"/>
</dbReference>
<dbReference type="SMR" id="Q5RFF0"/>
<dbReference type="FunCoup" id="Q5RFF0">
    <property type="interactions" value="69"/>
</dbReference>
<dbReference type="STRING" id="9601.ENSPPYP00000017512"/>
<dbReference type="GeneID" id="100189631"/>
<dbReference type="KEGG" id="pon:100189631"/>
<dbReference type="CTD" id="353189"/>
<dbReference type="eggNOG" id="KOG3626">
    <property type="taxonomic scope" value="Eukaryota"/>
</dbReference>
<dbReference type="InParanoid" id="Q5RFF0"/>
<dbReference type="OrthoDB" id="5062115at2759"/>
<dbReference type="Proteomes" id="UP000001595">
    <property type="component" value="Unplaced"/>
</dbReference>
<dbReference type="GO" id="GO:0016323">
    <property type="term" value="C:basolateral plasma membrane"/>
    <property type="evidence" value="ECO:0007669"/>
    <property type="project" value="UniProtKB-SubCell"/>
</dbReference>
<dbReference type="GO" id="GO:0008514">
    <property type="term" value="F:organic anion transmembrane transporter activity"/>
    <property type="evidence" value="ECO:0000250"/>
    <property type="project" value="UniProtKB"/>
</dbReference>
<dbReference type="GO" id="GO:0015347">
    <property type="term" value="F:sodium-independent organic anion transmembrane transporter activity"/>
    <property type="evidence" value="ECO:0007669"/>
    <property type="project" value="TreeGrafter"/>
</dbReference>
<dbReference type="GO" id="GO:0030154">
    <property type="term" value="P:cell differentiation"/>
    <property type="evidence" value="ECO:0007669"/>
    <property type="project" value="UniProtKB-KW"/>
</dbReference>
<dbReference type="GO" id="GO:0006811">
    <property type="term" value="P:monoatomic ion transport"/>
    <property type="evidence" value="ECO:0007669"/>
    <property type="project" value="UniProtKB-KW"/>
</dbReference>
<dbReference type="GO" id="GO:0043252">
    <property type="term" value="P:sodium-independent organic anion transport"/>
    <property type="evidence" value="ECO:0007669"/>
    <property type="project" value="TreeGrafter"/>
</dbReference>
<dbReference type="GO" id="GO:0007283">
    <property type="term" value="P:spermatogenesis"/>
    <property type="evidence" value="ECO:0007669"/>
    <property type="project" value="UniProtKB-KW"/>
</dbReference>
<dbReference type="CDD" id="cd17463">
    <property type="entry name" value="MFS_SLCO4C_OATP4C"/>
    <property type="match status" value="1"/>
</dbReference>
<dbReference type="Gene3D" id="1.20.1250.20">
    <property type="entry name" value="MFS general substrate transporter like domains"/>
    <property type="match status" value="1"/>
</dbReference>
<dbReference type="InterPro" id="IPR002350">
    <property type="entry name" value="Kazal_dom"/>
</dbReference>
<dbReference type="InterPro" id="IPR036058">
    <property type="entry name" value="Kazal_dom_sf"/>
</dbReference>
<dbReference type="InterPro" id="IPR020846">
    <property type="entry name" value="MFS_dom"/>
</dbReference>
<dbReference type="InterPro" id="IPR036259">
    <property type="entry name" value="MFS_trans_sf"/>
</dbReference>
<dbReference type="InterPro" id="IPR004156">
    <property type="entry name" value="OATP"/>
</dbReference>
<dbReference type="NCBIfam" id="TIGR00805">
    <property type="entry name" value="oat"/>
    <property type="match status" value="1"/>
</dbReference>
<dbReference type="PANTHER" id="PTHR11388">
    <property type="entry name" value="ORGANIC ANION TRANSPORTER"/>
    <property type="match status" value="1"/>
</dbReference>
<dbReference type="PANTHER" id="PTHR11388:SF103">
    <property type="entry name" value="SOLUTE CARRIER ORGANIC ANION TRANSPORTER FAMILY MEMBER 4C1"/>
    <property type="match status" value="1"/>
</dbReference>
<dbReference type="Pfam" id="PF07648">
    <property type="entry name" value="Kazal_2"/>
    <property type="match status" value="1"/>
</dbReference>
<dbReference type="Pfam" id="PF03137">
    <property type="entry name" value="OATP"/>
    <property type="match status" value="1"/>
</dbReference>
<dbReference type="SUPFAM" id="SSF100895">
    <property type="entry name" value="Kazal-type serine protease inhibitors"/>
    <property type="match status" value="1"/>
</dbReference>
<dbReference type="SUPFAM" id="SSF103473">
    <property type="entry name" value="MFS general substrate transporter"/>
    <property type="match status" value="1"/>
</dbReference>
<dbReference type="PROSITE" id="PS51465">
    <property type="entry name" value="KAZAL_2"/>
    <property type="match status" value="1"/>
</dbReference>
<dbReference type="PROSITE" id="PS50850">
    <property type="entry name" value="MFS"/>
    <property type="match status" value="1"/>
</dbReference>
<protein>
    <recommendedName>
        <fullName>Solute carrier organic anion transporter family member 4C1</fullName>
    </recommendedName>
    <alternativeName>
        <fullName>Solute carrier family 21 member 20</fullName>
    </alternativeName>
</protein>
<sequence>MKSAKGIENLAFVPSSPDILRRLSASPSQVEVSALSSDPQRENSQPQELQKPQEPQKSPEPSLPSAPPNVSEEKLRSLSLSDFEEGPYGWRNFHPQCLQRCNTPGGFLLHYCLLAVTQGIVVNGLVNISISTIEKRYEMKSSLTGLISSSYDISFCLLSLFVSFFGERGHKPRWLAFAAFMIGLGALVFSLPQFFSGEYKLGSLFEDTCVTTRNSTSCTSSTSSLSNYLYVFILGQLLLGAGGTPLYTLGTAFLDDSVPTHKSSLYIGTGYAMSILGPAIGYVLGGQLLTIYVDVAMGESTDITEDDPRWLGAWWIGFLLSWIFAWSLIIPFSCFPKHLPGTAEIQAGKTSQAHQSNSNADAKFGKSIKDFPAALKNLMKNAVFMCLVLSTSSEALITTGFATFLPKFIENQFGLTSSFAATLGGAVLIPGAALGQILGGFLVSKFKMTCKNTMKFALFTSGVALTLSFVFIYAKCGNEPFAGVSESYNGTGELGNLIAPCNANCNCLRSYYYPVCGDGVQYFSPCFAGCSNSVAHRKPKVYYNCSCIERKTETTSTAETFGFEAKAGKCETHCAKLPIFLCIFFIVIIFTFMAGTPITVSILRCVNHRQRSLALGIQFMVLRLLGTIPGPIIFGFTIDSTCILWDINDCGIKGACRIYDNIKMAHMLVAISVTCKVITMFFNGFAIFLYKPPPSATDLSFHKENAVVTNVLAEQDLNKIVKEG</sequence>
<accession>Q5RFF0</accession>
<accession>Q5R7Z2</accession>
<comment type="function">
    <text evidence="1 2 3">Mediates the transport of organic anions such as steroids (estrone 3-sulfate, chenodeoxycholate, glycocholate) and thyroid hormones (3,3',5-triiodo-L-thyronine (T3), L-thyroxine (T4)), in the kidney. Capable of transporting cAMP and pharmacological substances such as digoxin, ouabain and methotrexate. Transport is independent of sodium, chloride ion, and ATP. Transport activity is stimulated by an acidic extracellular environment due to increased substrate affinity to the transporter (By similarity). The driving force for this transport activity is currently not known (By similarity). The role of hydrogencarbonate (HCO3(-), bicarbonate) as the probable counteranion that exchanges for organic anions is still not well defined (By similarity). Functions as an uptake transporter at the apical membrane, suggesting a role in renal reabsorption (By similarity). Involved in the renal secretion of the uremic toxin ADMA (N(omega),N(omega)-dimethyl-L-arginine or asymmetrical dimethylarginine), which is associated to cardiovascular events and mortality, and the structurally related amino acids L-arginine and L-homoarginine (a cardioprotective biomarker). Can act bidirectionally, suggesting a dual protective role of this transport protein; exporting L-homoarginine after being synthesized in proximal tubule cells, and mediating uptake of ADMA from the blood into proximal tubule cells where it is degraded by the enzyme dimethylarginine dimethylaminohydrolase 1 (DDAH1) (By similarity). May be involved in sperm maturation by enabling directed movement of organic anions and compounds within or between cells. This ion-transporting process is important to maintain the strict epididymal homeostasis necessary for sperm maturation. May have a role in secretory functions since seminal vesicle epithelial cells are assumed to secrete proteins involved in decapacitation by modifying surface proteins to facilitate the acquisition of the ability to fertilize the egg (By similarity).</text>
</comment>
<comment type="catalytic activity">
    <reaction evidence="1">
        <text>estrone 3-sulfate(out) = estrone 3-sulfate(in)</text>
        <dbReference type="Rhea" id="RHEA:71835"/>
        <dbReference type="ChEBI" id="CHEBI:60050"/>
    </reaction>
</comment>
<comment type="catalytic activity">
    <reaction evidence="1">
        <text>L-thyroxine(out) = L-thyroxine(in)</text>
        <dbReference type="Rhea" id="RHEA:71819"/>
        <dbReference type="ChEBI" id="CHEBI:58448"/>
    </reaction>
</comment>
<comment type="catalytic activity">
    <reaction evidence="1">
        <text>3,3',5-triiodo-L-thyronine(out) = 3,3',5-triiodo-L-thyronine(in)</text>
        <dbReference type="Rhea" id="RHEA:71811"/>
        <dbReference type="ChEBI" id="CHEBI:533015"/>
    </reaction>
</comment>
<comment type="catalytic activity">
    <reaction evidence="1">
        <text>chenodeoxycholate(out) = chenodeoxycholate(in)</text>
        <dbReference type="Rhea" id="RHEA:75051"/>
        <dbReference type="ChEBI" id="CHEBI:36234"/>
    </reaction>
</comment>
<comment type="catalytic activity">
    <reaction evidence="1">
        <text>glycocholate(out) = glycocholate(in)</text>
        <dbReference type="Rhea" id="RHEA:71851"/>
        <dbReference type="ChEBI" id="CHEBI:29746"/>
    </reaction>
</comment>
<comment type="catalytic activity">
    <reaction evidence="1">
        <text>L-homoarginine(in) = L-homoarginine(out)</text>
        <dbReference type="Rhea" id="RHEA:71203"/>
        <dbReference type="ChEBI" id="CHEBI:143006"/>
    </reaction>
</comment>
<comment type="catalytic activity">
    <reaction evidence="1">
        <text>L-arginine(in) = L-arginine(out)</text>
        <dbReference type="Rhea" id="RHEA:32143"/>
        <dbReference type="ChEBI" id="CHEBI:32682"/>
    </reaction>
</comment>
<comment type="catalytic activity">
    <reaction evidence="1">
        <text>N(omega),N(omega)-dimethyl-L-arginine(out) = N(omega),N(omega)-dimethyl-L-arginine(in)</text>
        <dbReference type="Rhea" id="RHEA:75047"/>
        <dbReference type="ChEBI" id="CHEBI:58326"/>
    </reaction>
</comment>
<comment type="subcellular location">
    <subcellularLocation>
        <location evidence="2">Basolateral cell membrane</location>
        <topology evidence="2">Multi-pass membrane protein</topology>
    </subcellularLocation>
    <text evidence="2">Detected at the basolateral membrane of the proximal tubule cell in the kidney.</text>
</comment>
<comment type="similarity">
    <text evidence="4">Belongs to the organo anion transporter (TC 2.A.60) family.</text>
</comment>
<keyword id="KW-1003">Cell membrane</keyword>
<keyword id="KW-0217">Developmental protein</keyword>
<keyword id="KW-0221">Differentiation</keyword>
<keyword id="KW-1015">Disulfide bond</keyword>
<keyword id="KW-0406">Ion transport</keyword>
<keyword id="KW-0472">Membrane</keyword>
<keyword id="KW-0597">Phosphoprotein</keyword>
<keyword id="KW-1185">Reference proteome</keyword>
<keyword id="KW-0744">Spermatogenesis</keyword>
<keyword id="KW-0812">Transmembrane</keyword>
<keyword id="KW-1133">Transmembrane helix</keyword>
<keyword id="KW-0813">Transport</keyword>
<reference evidence="8" key="1">
    <citation type="submission" date="2004-11" db="EMBL/GenBank/DDBJ databases">
        <authorList>
            <consortium name="The German cDNA consortium"/>
        </authorList>
    </citation>
    <scope>NUCLEOTIDE SEQUENCE [LARGE SCALE MRNA]</scope>
    <source>
        <tissue evidence="8">Kidney</tissue>
    </source>
</reference>
<organism>
    <name type="scientific">Pongo abelii</name>
    <name type="common">Sumatran orangutan</name>
    <name type="synonym">Pongo pygmaeus abelii</name>
    <dbReference type="NCBI Taxonomy" id="9601"/>
    <lineage>
        <taxon>Eukaryota</taxon>
        <taxon>Metazoa</taxon>
        <taxon>Chordata</taxon>
        <taxon>Craniata</taxon>
        <taxon>Vertebrata</taxon>
        <taxon>Euteleostomi</taxon>
        <taxon>Mammalia</taxon>
        <taxon>Eutheria</taxon>
        <taxon>Euarchontoglires</taxon>
        <taxon>Primates</taxon>
        <taxon>Haplorrhini</taxon>
        <taxon>Catarrhini</taxon>
        <taxon>Hominidae</taxon>
        <taxon>Pongo</taxon>
    </lineage>
</organism>
<feature type="chain" id="PRO_0000337153" description="Solute carrier organic anion transporter family member 4C1">
    <location>
        <begin position="1"/>
        <end position="724"/>
    </location>
</feature>
<feature type="topological domain" description="Cytoplasmic" evidence="4">
    <location>
        <begin position="1"/>
        <end position="105"/>
    </location>
</feature>
<feature type="transmembrane region" description="Helical; Name=1" evidence="4">
    <location>
        <begin position="106"/>
        <end position="126"/>
    </location>
</feature>
<feature type="topological domain" description="Extracellular" evidence="4">
    <location>
        <begin position="127"/>
        <end position="145"/>
    </location>
</feature>
<feature type="transmembrane region" description="Helical; Name=2" evidence="4">
    <location>
        <begin position="146"/>
        <end position="166"/>
    </location>
</feature>
<feature type="topological domain" description="Cytoplasmic" evidence="4">
    <location>
        <begin position="167"/>
        <end position="172"/>
    </location>
</feature>
<feature type="transmembrane region" description="Helical; Name=3" evidence="4">
    <location>
        <begin position="173"/>
        <end position="197"/>
    </location>
</feature>
<feature type="topological domain" description="Extracellular" evidence="4">
    <location>
        <begin position="198"/>
        <end position="224"/>
    </location>
</feature>
<feature type="transmembrane region" description="Helical; Name=4" evidence="4">
    <location>
        <begin position="225"/>
        <end position="254"/>
    </location>
</feature>
<feature type="topological domain" description="Cytoplasmic" evidence="4">
    <location>
        <begin position="255"/>
        <end position="274"/>
    </location>
</feature>
<feature type="transmembrane region" description="Helical; Name=5" evidence="4">
    <location>
        <begin position="275"/>
        <end position="295"/>
    </location>
</feature>
<feature type="topological domain" description="Extracellular" evidence="4">
    <location>
        <begin position="296"/>
        <end position="311"/>
    </location>
</feature>
<feature type="transmembrane region" description="Helical; Name=6" evidence="4">
    <location>
        <begin position="312"/>
        <end position="336"/>
    </location>
</feature>
<feature type="topological domain" description="Cytoplasmic" evidence="4">
    <location>
        <begin position="337"/>
        <end position="377"/>
    </location>
</feature>
<feature type="transmembrane region" description="Helical; Name=7" evidence="4">
    <location>
        <begin position="378"/>
        <end position="399"/>
    </location>
</feature>
<feature type="topological domain" description="Extracellular" evidence="4">
    <location>
        <begin position="400"/>
        <end position="419"/>
    </location>
</feature>
<feature type="transmembrane region" description="Helical; Name=8" evidence="4">
    <location>
        <begin position="420"/>
        <end position="443"/>
    </location>
</feature>
<feature type="topological domain" description="Cytoplasmic" evidence="4">
    <location>
        <begin position="444"/>
        <end position="447"/>
    </location>
</feature>
<feature type="transmembrane region" description="Helical; Name=9" evidence="4">
    <location>
        <begin position="448"/>
        <end position="471"/>
    </location>
</feature>
<feature type="topological domain" description="Extracellular" evidence="4">
    <location>
        <begin position="472"/>
        <end position="580"/>
    </location>
</feature>
<feature type="transmembrane region" description="Helical; Name=10" evidence="4">
    <location>
        <begin position="581"/>
        <end position="603"/>
    </location>
</feature>
<feature type="topological domain" description="Cytoplasmic" evidence="4">
    <location>
        <begin position="604"/>
        <end position="612"/>
    </location>
</feature>
<feature type="transmembrane region" description="Helical; Name=11" evidence="4">
    <location>
        <begin position="613"/>
        <end position="638"/>
    </location>
</feature>
<feature type="topological domain" description="Extracellular" evidence="4">
    <location>
        <begin position="639"/>
        <end position="672"/>
    </location>
</feature>
<feature type="transmembrane region" description="Helical; Name=12" evidence="4">
    <location>
        <begin position="673"/>
        <end position="690"/>
    </location>
</feature>
<feature type="topological domain" description="Cytoplasmic" evidence="4">
    <location>
        <begin position="691"/>
        <end position="724"/>
    </location>
</feature>
<feature type="domain" description="Kazal-like" evidence="5">
    <location>
        <begin position="495"/>
        <end position="549"/>
    </location>
</feature>
<feature type="region of interest" description="Disordered" evidence="6">
    <location>
        <begin position="24"/>
        <end position="71"/>
    </location>
</feature>
<feature type="compositionally biased region" description="Polar residues" evidence="6">
    <location>
        <begin position="25"/>
        <end position="38"/>
    </location>
</feature>
<feature type="compositionally biased region" description="Low complexity" evidence="6">
    <location>
        <begin position="44"/>
        <end position="60"/>
    </location>
</feature>
<feature type="modified residue" description="Phosphoserine" evidence="2">
    <location>
        <position position="15"/>
    </location>
</feature>
<feature type="modified residue" description="Phosphoserine" evidence="3">
    <location>
        <position position="16"/>
    </location>
</feature>
<feature type="modified residue" description="Phosphoserine" evidence="3">
    <location>
        <position position="24"/>
    </location>
</feature>
<feature type="modified residue" description="Phosphoserine" evidence="3">
    <location>
        <position position="26"/>
    </location>
</feature>
<feature type="modified residue" description="Phosphoserine" evidence="3">
    <location>
        <position position="28"/>
    </location>
</feature>
<feature type="disulfide bond" evidence="5">
    <location>
        <begin position="501"/>
        <end position="530"/>
    </location>
</feature>
<feature type="disulfide bond" evidence="5">
    <location>
        <begin position="507"/>
        <end position="526"/>
    </location>
</feature>
<feature type="disulfide bond" evidence="5">
    <location>
        <begin position="516"/>
        <end position="547"/>
    </location>
</feature>
<feature type="sequence conflict" description="In Ref. 1; CAH92118." evidence="7" ref="1">
    <original>I</original>
    <variation>T</variation>
    <location>
        <position position="617"/>
    </location>
</feature>
<proteinExistence type="evidence at transcript level"/>
<evidence type="ECO:0000250" key="1">
    <source>
        <dbReference type="UniProtKB" id="Q6ZQN7"/>
    </source>
</evidence>
<evidence type="ECO:0000250" key="2">
    <source>
        <dbReference type="UniProtKB" id="Q71MB6"/>
    </source>
</evidence>
<evidence type="ECO:0000250" key="3">
    <source>
        <dbReference type="UniProtKB" id="Q8BGD4"/>
    </source>
</evidence>
<evidence type="ECO:0000255" key="4"/>
<evidence type="ECO:0000255" key="5">
    <source>
        <dbReference type="PROSITE-ProRule" id="PRU00798"/>
    </source>
</evidence>
<evidence type="ECO:0000256" key="6">
    <source>
        <dbReference type="SAM" id="MobiDB-lite"/>
    </source>
</evidence>
<evidence type="ECO:0000305" key="7"/>
<evidence type="ECO:0000312" key="8">
    <source>
        <dbReference type="EMBL" id="CAH89507.1"/>
    </source>
</evidence>
<gene>
    <name evidence="1" type="primary">SLCO4C1</name>
    <name evidence="1" type="synonym">OATP4C1</name>
    <name evidence="1" type="synonym">SLC21A20</name>
</gene>